<keyword id="KW-0143">Chaperone</keyword>
<keyword id="KW-0963">Cytoplasm</keyword>
<keyword id="KW-0690">Ribosome biogenesis</keyword>
<keyword id="KW-0698">rRNA processing</keyword>
<organism>
    <name type="scientific">Prochlorococcus marinus (strain MIT 9303)</name>
    <dbReference type="NCBI Taxonomy" id="59922"/>
    <lineage>
        <taxon>Bacteria</taxon>
        <taxon>Bacillati</taxon>
        <taxon>Cyanobacteriota</taxon>
        <taxon>Cyanophyceae</taxon>
        <taxon>Synechococcales</taxon>
        <taxon>Prochlorococcaceae</taxon>
        <taxon>Prochlorococcus</taxon>
    </lineage>
</organism>
<dbReference type="EMBL" id="CP000554">
    <property type="protein sequence ID" value="ABM79332.1"/>
    <property type="status" value="ALT_INIT"/>
    <property type="molecule type" value="Genomic_DNA"/>
</dbReference>
<dbReference type="SMR" id="A2CCX2"/>
<dbReference type="STRING" id="59922.P9303_26021"/>
<dbReference type="KEGG" id="pmf:P9303_26021"/>
<dbReference type="HOGENOM" id="CLU_077636_3_0_3"/>
<dbReference type="Proteomes" id="UP000002274">
    <property type="component" value="Chromosome"/>
</dbReference>
<dbReference type="GO" id="GO:0005737">
    <property type="term" value="C:cytoplasm"/>
    <property type="evidence" value="ECO:0007669"/>
    <property type="project" value="UniProtKB-SubCell"/>
</dbReference>
<dbReference type="GO" id="GO:0005840">
    <property type="term" value="C:ribosome"/>
    <property type="evidence" value="ECO:0007669"/>
    <property type="project" value="InterPro"/>
</dbReference>
<dbReference type="GO" id="GO:0043022">
    <property type="term" value="F:ribosome binding"/>
    <property type="evidence" value="ECO:0007669"/>
    <property type="project" value="InterPro"/>
</dbReference>
<dbReference type="GO" id="GO:0042274">
    <property type="term" value="P:ribosomal small subunit biogenesis"/>
    <property type="evidence" value="ECO:0007669"/>
    <property type="project" value="UniProtKB-UniRule"/>
</dbReference>
<dbReference type="GO" id="GO:0006364">
    <property type="term" value="P:rRNA processing"/>
    <property type="evidence" value="ECO:0007669"/>
    <property type="project" value="UniProtKB-UniRule"/>
</dbReference>
<dbReference type="Gene3D" id="2.30.30.240">
    <property type="entry name" value="PRC-barrel domain"/>
    <property type="match status" value="1"/>
</dbReference>
<dbReference type="Gene3D" id="2.40.30.60">
    <property type="entry name" value="RimM"/>
    <property type="match status" value="1"/>
</dbReference>
<dbReference type="HAMAP" id="MF_00014">
    <property type="entry name" value="Ribosome_mat_RimM"/>
    <property type="match status" value="1"/>
</dbReference>
<dbReference type="InterPro" id="IPR011033">
    <property type="entry name" value="PRC_barrel-like_sf"/>
</dbReference>
<dbReference type="InterPro" id="IPR056792">
    <property type="entry name" value="PRC_RimM"/>
</dbReference>
<dbReference type="InterPro" id="IPR011961">
    <property type="entry name" value="RimM"/>
</dbReference>
<dbReference type="InterPro" id="IPR002676">
    <property type="entry name" value="RimM_N"/>
</dbReference>
<dbReference type="InterPro" id="IPR036976">
    <property type="entry name" value="RimM_N_sf"/>
</dbReference>
<dbReference type="InterPro" id="IPR009000">
    <property type="entry name" value="Transl_B-barrel_sf"/>
</dbReference>
<dbReference type="NCBIfam" id="TIGR02273">
    <property type="entry name" value="16S_RimM"/>
    <property type="match status" value="1"/>
</dbReference>
<dbReference type="PANTHER" id="PTHR33692">
    <property type="entry name" value="RIBOSOME MATURATION FACTOR RIMM"/>
    <property type="match status" value="1"/>
</dbReference>
<dbReference type="PANTHER" id="PTHR33692:SF1">
    <property type="entry name" value="RIBOSOME MATURATION FACTOR RIMM"/>
    <property type="match status" value="1"/>
</dbReference>
<dbReference type="Pfam" id="PF24986">
    <property type="entry name" value="PRC_RimM"/>
    <property type="match status" value="1"/>
</dbReference>
<dbReference type="Pfam" id="PF01782">
    <property type="entry name" value="RimM"/>
    <property type="match status" value="1"/>
</dbReference>
<dbReference type="SUPFAM" id="SSF50346">
    <property type="entry name" value="PRC-barrel domain"/>
    <property type="match status" value="1"/>
</dbReference>
<dbReference type="SUPFAM" id="SSF50447">
    <property type="entry name" value="Translation proteins"/>
    <property type="match status" value="1"/>
</dbReference>
<comment type="function">
    <text evidence="1">An accessory protein needed during the final step in the assembly of 30S ribosomal subunit, possibly for assembly of the head region. Essential for efficient processing of 16S rRNA. May be needed both before and after RbfA during the maturation of 16S rRNA. It has affinity for free ribosomal 30S subunits but not for 70S ribosomes.</text>
</comment>
<comment type="subunit">
    <text evidence="1">Binds ribosomal protein uS19.</text>
</comment>
<comment type="subcellular location">
    <subcellularLocation>
        <location evidence="1">Cytoplasm</location>
    </subcellularLocation>
</comment>
<comment type="domain">
    <text evidence="1">The PRC barrel domain binds ribosomal protein uS19.</text>
</comment>
<comment type="similarity">
    <text evidence="1">Belongs to the RimM family.</text>
</comment>
<comment type="sequence caution" evidence="2">
    <conflict type="erroneous initiation">
        <sequence resource="EMBL-CDS" id="ABM79332"/>
    </conflict>
</comment>
<feature type="chain" id="PRO_0000321745" description="Ribosome maturation factor RimM">
    <location>
        <begin position="1"/>
        <end position="176"/>
    </location>
</feature>
<feature type="domain" description="PRC barrel" evidence="1">
    <location>
        <begin position="100"/>
        <end position="173"/>
    </location>
</feature>
<evidence type="ECO:0000255" key="1">
    <source>
        <dbReference type="HAMAP-Rule" id="MF_00014"/>
    </source>
</evidence>
<evidence type="ECO:0000305" key="2"/>
<gene>
    <name evidence="1" type="primary">rimM</name>
    <name type="ordered locus">P9303_26021</name>
</gene>
<proteinExistence type="inferred from homology"/>
<protein>
    <recommendedName>
        <fullName evidence="1">Ribosome maturation factor RimM</fullName>
    </recommendedName>
</protein>
<name>RIMM_PROM3</name>
<sequence length="176" mass="19252">MNGDEDWLTVGKLVAAQGMQGELRINPSSDFPERFTLPGQRWLKERNGEPRPIELLTGRQLPGRSLYVVKFAGVNNRNAAEALVGQNLLVPSSDRPSLAEGEFHLLDLVGLEARLQAEGPAIGHVIDLTTAGNDLLEIELLAGRRVLVPFVEAIVPEVQLNQGWLRLTPPPGLLEL</sequence>
<accession>A2CCX2</accession>
<reference key="1">
    <citation type="journal article" date="2007" name="PLoS Genet.">
        <title>Patterns and implications of gene gain and loss in the evolution of Prochlorococcus.</title>
        <authorList>
            <person name="Kettler G.C."/>
            <person name="Martiny A.C."/>
            <person name="Huang K."/>
            <person name="Zucker J."/>
            <person name="Coleman M.L."/>
            <person name="Rodrigue S."/>
            <person name="Chen F."/>
            <person name="Lapidus A."/>
            <person name="Ferriera S."/>
            <person name="Johnson J."/>
            <person name="Steglich C."/>
            <person name="Church G.M."/>
            <person name="Richardson P."/>
            <person name="Chisholm S.W."/>
        </authorList>
    </citation>
    <scope>NUCLEOTIDE SEQUENCE [LARGE SCALE GENOMIC DNA]</scope>
    <source>
        <strain>MIT 9303</strain>
    </source>
</reference>